<evidence type="ECO:0000255" key="1">
    <source>
        <dbReference type="HAMAP-Rule" id="MF_01906"/>
    </source>
</evidence>
<evidence type="ECO:0000256" key="2">
    <source>
        <dbReference type="SAM" id="MobiDB-lite"/>
    </source>
</evidence>
<organism>
    <name type="scientific">Cupriavidus metallidurans (strain ATCC 43123 / DSM 2839 / NBRC 102507 / CH34)</name>
    <name type="common">Ralstonia metallidurans</name>
    <dbReference type="NCBI Taxonomy" id="266264"/>
    <lineage>
        <taxon>Bacteria</taxon>
        <taxon>Pseudomonadati</taxon>
        <taxon>Pseudomonadota</taxon>
        <taxon>Betaproteobacteria</taxon>
        <taxon>Burkholderiales</taxon>
        <taxon>Burkholderiaceae</taxon>
        <taxon>Cupriavidus</taxon>
    </lineage>
</organism>
<name>HBOH_CUPMC</name>
<comment type="function">
    <text evidence="1">Participates in the degradation of poly-3-hydroxybutyrate (PHB). It works downstream of poly(3-hydroxybutyrate) depolymerase, hydrolyzing D(-)-3-hydroxybutyrate oligomers of various length (3HB-oligomers) into 3HB-monomers.</text>
</comment>
<comment type="catalytic activity">
    <reaction evidence="1">
        <text>(3R)-hydroxybutanoate dimer + H2O = 2 (R)-3-hydroxybutanoate + H(+)</text>
        <dbReference type="Rhea" id="RHEA:10172"/>
        <dbReference type="ChEBI" id="CHEBI:10979"/>
        <dbReference type="ChEBI" id="CHEBI:10983"/>
        <dbReference type="ChEBI" id="CHEBI:15377"/>
        <dbReference type="ChEBI" id="CHEBI:15378"/>
        <dbReference type="EC" id="3.1.1.22"/>
    </reaction>
</comment>
<comment type="pathway">
    <text evidence="1">Lipid metabolism; butanoate metabolism.</text>
</comment>
<comment type="subcellular location">
    <subcellularLocation>
        <location evidence="1">Secreted</location>
    </subcellularLocation>
</comment>
<comment type="similarity">
    <text evidence="1">Belongs to the D-(-)-3-hydroxybutyrate oligomer hydrolase family.</text>
</comment>
<feature type="signal peptide" evidence="1">
    <location>
        <begin position="1"/>
        <end position="36"/>
    </location>
</feature>
<feature type="chain" id="PRO_5000118750" description="D-(-)-3-hydroxybutyrate oligomer hydrolase">
    <location>
        <begin position="37"/>
        <end position="722"/>
    </location>
</feature>
<feature type="region of interest" description="Disordered" evidence="2">
    <location>
        <begin position="1"/>
        <end position="20"/>
    </location>
</feature>
<feature type="region of interest" description="Disordered" evidence="2">
    <location>
        <begin position="671"/>
        <end position="697"/>
    </location>
</feature>
<feature type="compositionally biased region" description="Polar residues" evidence="2">
    <location>
        <begin position="1"/>
        <end position="11"/>
    </location>
</feature>
<feature type="active site" description="Charge relay system" evidence="1">
    <location>
        <position position="327"/>
    </location>
</feature>
<accession>Q1LLY7</accession>
<proteinExistence type="inferred from homology"/>
<keyword id="KW-0378">Hydrolase</keyword>
<keyword id="KW-1185">Reference proteome</keyword>
<keyword id="KW-0964">Secreted</keyword>
<keyword id="KW-0732">Signal</keyword>
<gene>
    <name type="ordered locus">Rmet_1960</name>
</gene>
<protein>
    <recommendedName>
        <fullName evidence="1">D-(-)-3-hydroxybutyrate oligomer hydrolase</fullName>
        <shortName evidence="1">3HB-oligomer hydrolase</shortName>
        <shortName evidence="1">3HBOH</shortName>
        <ecNumber evidence="1">3.1.1.22</ecNumber>
    </recommendedName>
</protein>
<sequence length="722" mass="73917">MQQRHLSQSAHSHGHGTRRAHRRNTIAIAVATLAVAACGGFGTNGSGGNTGPNVKPAFISGPVGVKSYDGNTDDLLTAGLGKDGLAAAAPAFANPNAPTAVELRRNAIWANYRAIVDVQAAGGYGSLYGPNVDAKGNVTTGQGKVPGTEYIAFTDDGSGRQNVTVMAQVPDGFDVKHPCIISATSSGSRGVYGGIAVGEWGLKHNCAVAYTDKGTGAAPHDLGSDTVPLIDGTRQTRAGAGTQAQFAAQPGASETLAGFNSSTPHRLAFKHAHSQQNPEANWGANTLQAIQFTLWAVNDKFGRTNTDGMRQATFTPANVLVIASAISNGGGAAIAAAEQDTGGLIDGVAVGEPNVNLPPTAGVVVKRGGVPVAASGKHLYDYTTIANLYQLCASQDASLGNAPFAKTAGQAALNRCASLAAKKMIAGGSTSAQATSALDALHRAGWEPESDDLFASLSALEVGSSISVTYANAYARASVTDRLCHYSFSSPGSPPQANPVTAPAAALAGLFSTGNGIPPTTAVTLMNDANPSGAMRDFTSISPSTKLADGNVDGALCLRGLLDTRNPALMTGIGQTYRTGNLGGRPSVIVQGRSDGLLPVNHTSRPYLGLNKHVEGASSRLSYIEVTNGQHFDGFIDVIPGYAKRYIPMHVYVNRALDAVYANLRDGTPLPPSQVVRTTPRGGADTDTVGPRIQPSNVPPIAATPAAGDAITVTGSTVDVPN</sequence>
<reference key="1">
    <citation type="journal article" date="2010" name="PLoS ONE">
        <title>The complete genome sequence of Cupriavidus metallidurans strain CH34, a master survivalist in harsh and anthropogenic environments.</title>
        <authorList>
            <person name="Janssen P.J."/>
            <person name="Van Houdt R."/>
            <person name="Moors H."/>
            <person name="Monsieurs P."/>
            <person name="Morin N."/>
            <person name="Michaux A."/>
            <person name="Benotmane M.A."/>
            <person name="Leys N."/>
            <person name="Vallaeys T."/>
            <person name="Lapidus A."/>
            <person name="Monchy S."/>
            <person name="Medigue C."/>
            <person name="Taghavi S."/>
            <person name="McCorkle S."/>
            <person name="Dunn J."/>
            <person name="van der Lelie D."/>
            <person name="Mergeay M."/>
        </authorList>
    </citation>
    <scope>NUCLEOTIDE SEQUENCE [LARGE SCALE GENOMIC DNA]</scope>
    <source>
        <strain>ATCC 43123 / DSM 2839 / NBRC 102507 / CH34</strain>
    </source>
</reference>
<dbReference type="EC" id="3.1.1.22" evidence="1"/>
<dbReference type="EMBL" id="CP000352">
    <property type="protein sequence ID" value="ABF08839.1"/>
    <property type="molecule type" value="Genomic_DNA"/>
</dbReference>
<dbReference type="RefSeq" id="WP_011516685.1">
    <property type="nucleotide sequence ID" value="NC_007973.1"/>
</dbReference>
<dbReference type="STRING" id="266264.Rmet_1960"/>
<dbReference type="KEGG" id="rme:Rmet_1960"/>
<dbReference type="eggNOG" id="ENOG502Z8QU">
    <property type="taxonomic scope" value="Bacteria"/>
</dbReference>
<dbReference type="HOGENOM" id="CLU_420258_0_0_4"/>
<dbReference type="UniPathway" id="UPA00863"/>
<dbReference type="Proteomes" id="UP000002429">
    <property type="component" value="Chromosome"/>
</dbReference>
<dbReference type="GO" id="GO:0005615">
    <property type="term" value="C:extracellular space"/>
    <property type="evidence" value="ECO:0007669"/>
    <property type="project" value="InterPro"/>
</dbReference>
<dbReference type="GO" id="GO:0047989">
    <property type="term" value="F:hydroxybutyrate-dimer hydrolase activity"/>
    <property type="evidence" value="ECO:0007669"/>
    <property type="project" value="UniProtKB-UniRule"/>
</dbReference>
<dbReference type="GO" id="GO:0019605">
    <property type="term" value="P:butyrate metabolic process"/>
    <property type="evidence" value="ECO:0007669"/>
    <property type="project" value="UniProtKB-UniRule"/>
</dbReference>
<dbReference type="HAMAP" id="MF_01906">
    <property type="entry name" value="3HBOH"/>
    <property type="match status" value="1"/>
</dbReference>
<dbReference type="InterPro" id="IPR016582">
    <property type="entry name" value="OHBut_olig_hydro_put"/>
</dbReference>
<dbReference type="Pfam" id="PF10605">
    <property type="entry name" value="3HBOH"/>
    <property type="match status" value="1"/>
</dbReference>
<dbReference type="PIRSF" id="PIRSF011409">
    <property type="entry name" value="HObutyrate_olig_hydrol"/>
    <property type="match status" value="1"/>
</dbReference>